<evidence type="ECO:0000250" key="1"/>
<evidence type="ECO:0000255" key="2"/>
<evidence type="ECO:0000305" key="3"/>
<feature type="chain" id="PRO_0000295568" description="Matrix protein">
    <location>
        <begin position="1"/>
        <end position="202"/>
    </location>
</feature>
<feature type="region of interest" description="Essential for glycoprotein binding" evidence="1">
    <location>
        <begin position="125"/>
        <end position="161"/>
    </location>
</feature>
<feature type="short sequence motif" description="PPXY motif" evidence="2">
    <location>
        <begin position="45"/>
        <end position="48"/>
    </location>
</feature>
<keyword id="KW-1043">Host membrane</keyword>
<keyword id="KW-0945">Host-virus interaction</keyword>
<keyword id="KW-0472">Membrane</keyword>
<keyword id="KW-0597">Phosphoprotein</keyword>
<keyword id="KW-1198">Viral budding</keyword>
<keyword id="KW-1187">Viral budding via the host ESCRT complexes</keyword>
<keyword id="KW-0261">Viral envelope protein</keyword>
<keyword id="KW-0468">Viral matrix protein</keyword>
<keyword id="KW-1188">Viral release from host cell</keyword>
<keyword id="KW-0946">Virion</keyword>
<gene>
    <name type="primary">M</name>
</gene>
<name>MATRX_ABLVH</name>
<reference key="1">
    <citation type="journal article" date="2002" name="Virology">
        <title>Sequence analysis of an isolate from a fatal human infection of Australian bat lyssavirus.</title>
        <authorList>
            <person name="Warrilow D."/>
            <person name="Smith I.L."/>
            <person name="Harrower B."/>
            <person name="Smith G.A."/>
        </authorList>
    </citation>
    <scope>NUCLEOTIDE SEQUENCE [GENOMIC RNA]</scope>
</reference>
<reference key="2">
    <citation type="submission" date="2014-04" db="EMBL/GenBank/DDBJ databases">
        <authorList>
            <person name="Warrilow D."/>
            <person name="Serafin I.L."/>
            <person name="Harrower B.J."/>
            <person name="Smith G.A."/>
        </authorList>
    </citation>
    <scope>SEQUENCE REVISION</scope>
</reference>
<dbReference type="EMBL" id="AF418014">
    <property type="protein sequence ID" value="AAN05308.2"/>
    <property type="molecule type" value="Genomic_RNA"/>
</dbReference>
<dbReference type="SMR" id="Q8JTH1"/>
<dbReference type="IntAct" id="Q8JTH1">
    <property type="interactions" value="1"/>
</dbReference>
<dbReference type="Proteomes" id="UP000006884">
    <property type="component" value="Genome"/>
</dbReference>
<dbReference type="GO" id="GO:0033645">
    <property type="term" value="C:host cell endomembrane system"/>
    <property type="evidence" value="ECO:0007669"/>
    <property type="project" value="UniProtKB-SubCell"/>
</dbReference>
<dbReference type="GO" id="GO:0016020">
    <property type="term" value="C:membrane"/>
    <property type="evidence" value="ECO:0007669"/>
    <property type="project" value="UniProtKB-KW"/>
</dbReference>
<dbReference type="GO" id="GO:0019031">
    <property type="term" value="C:viral envelope"/>
    <property type="evidence" value="ECO:0007669"/>
    <property type="project" value="UniProtKB-KW"/>
</dbReference>
<dbReference type="GO" id="GO:0055036">
    <property type="term" value="C:virion membrane"/>
    <property type="evidence" value="ECO:0007669"/>
    <property type="project" value="UniProtKB-SubCell"/>
</dbReference>
<dbReference type="GO" id="GO:0039660">
    <property type="term" value="F:structural constituent of virion"/>
    <property type="evidence" value="ECO:0007669"/>
    <property type="project" value="UniProtKB-KW"/>
</dbReference>
<dbReference type="GO" id="GO:0039702">
    <property type="term" value="P:viral budding via host ESCRT complex"/>
    <property type="evidence" value="ECO:0007669"/>
    <property type="project" value="UniProtKB-KW"/>
</dbReference>
<dbReference type="Gene3D" id="3.10.460.20">
    <property type="entry name" value="Rhabdovirus matrix protein M2"/>
    <property type="match status" value="1"/>
</dbReference>
<dbReference type="InterPro" id="IPR006870">
    <property type="entry name" value="Rhabdo_M"/>
</dbReference>
<dbReference type="InterPro" id="IPR038617">
    <property type="entry name" value="Rhabdovirus_M_sf"/>
</dbReference>
<dbReference type="Pfam" id="PF04785">
    <property type="entry name" value="Rhabdo_M2"/>
    <property type="match status" value="1"/>
</dbReference>
<organism>
    <name type="scientific">Australian bat lyssavirus (isolate Human/AUS/1998)</name>
    <name type="common">ABLV</name>
    <dbReference type="NCBI Taxonomy" id="446562"/>
    <lineage>
        <taxon>Viruses</taxon>
        <taxon>Riboviria</taxon>
        <taxon>Orthornavirae</taxon>
        <taxon>Negarnaviricota</taxon>
        <taxon>Haploviricotina</taxon>
        <taxon>Monjiviricetes</taxon>
        <taxon>Mononegavirales</taxon>
        <taxon>Rhabdoviridae</taxon>
        <taxon>Alpharhabdovirinae</taxon>
        <taxon>Lyssavirus</taxon>
        <taxon>Lyssavirus australis</taxon>
    </lineage>
</organism>
<accession>Q8JTH1</accession>
<proteinExistence type="inferred from homology"/>
<protein>
    <recommendedName>
        <fullName>Matrix protein</fullName>
    </recommendedName>
    <alternativeName>
        <fullName>Phosphoprotein M2</fullName>
    </alternativeName>
</protein>
<organismHost>
    <name type="scientific">Homo sapiens</name>
    <name type="common">Human</name>
    <dbReference type="NCBI Taxonomy" id="9606"/>
</organismHost>
<organismHost>
    <name type="scientific">Pteropus alecto</name>
    <name type="common">Black flying fox</name>
    <dbReference type="NCBI Taxonomy" id="9402"/>
</organismHost>
<organismHost>
    <name type="scientific">Pteropus conspicillatus</name>
    <name type="common">Spectacled flying fox</name>
    <dbReference type="NCBI Taxonomy" id="328804"/>
</organismHost>
<organismHost>
    <name type="scientific">Pteropus poliocephalus</name>
    <name type="common">Grey-headed flying fox</name>
    <dbReference type="NCBI Taxonomy" id="9403"/>
</organismHost>
<organismHost>
    <name type="scientific">Pteropus scapulatus</name>
    <name type="common">Little red flying fox</name>
    <dbReference type="NCBI Taxonomy" id="94117"/>
</organismHost>
<organismHost>
    <name type="scientific">Saccolaimus</name>
    <dbReference type="NCBI Taxonomy" id="446909"/>
</organismHost>
<comment type="function">
    <text evidence="1">Plays a major role in assembly and budding of virion. Completely covers the ribonucleoprotein coil and keep it in condensed bullet-shaped form. Inhibits viral transcription and stimulates replication. Plays a major role in early induction of TRAIL-mediated apoptosis in infected neurons (By similarity).</text>
</comment>
<comment type="subunit">
    <text evidence="1">Homomultimer. Interacts with nucleoprotein and with the cytoplasmic domain of glycoprotein (By similarity).</text>
</comment>
<comment type="subcellular location">
    <subcellularLocation>
        <location>Virion membrane</location>
        <topology>Peripheral membrane protein</topology>
    </subcellularLocation>
    <subcellularLocation>
        <location evidence="1">Host endomembrane system</location>
        <topology evidence="1">Peripheral membrane protein</topology>
    </subcellularLocation>
</comment>
<comment type="domain">
    <text evidence="3">Late-budding domains (L domains) are short sequence motifs essential for viral particle budding. They recruit proteins of the host ESCRT machinery (Endosomal Sorting Complex Required for Transport) or ESCRT-associated proteins. Matrix protein contains one L domain: a PPXY motif which potentially interacts with the WW domain 3 of NEDD4 E3 ubiquitin ligase (Potential).</text>
</comment>
<comment type="miscellaneous">
    <text evidence="1">Most abundant protein in the virion.</text>
</comment>
<comment type="similarity">
    <text evidence="3">Belongs to the lyssavirus matrix protein family.</text>
</comment>
<sequence length="202" mass="23303">MNFLRKIVRNCKDEDDQKPPLVSAPPDDDDLWLPPPEYVPLTEITGKRNMRNFCINGEVKVCSPNGYSFRILRHILKSFDEIYSGNHRMIGLVKVVIGLALSGAPVPEGMNWVYKLRRTLIFQWAESRGPLDGEELEYSQEITWDDDSEFIGLQIRVSARQCHIQGRIWCINMNSRACQLWSDMSLKTQQSEEDKNSSLLLE</sequence>